<organism>
    <name type="scientific">Drosophila melanogaster</name>
    <name type="common">Fruit fly</name>
    <dbReference type="NCBI Taxonomy" id="7227"/>
    <lineage>
        <taxon>Eukaryota</taxon>
        <taxon>Metazoa</taxon>
        <taxon>Ecdysozoa</taxon>
        <taxon>Arthropoda</taxon>
        <taxon>Hexapoda</taxon>
        <taxon>Insecta</taxon>
        <taxon>Pterygota</taxon>
        <taxon>Neoptera</taxon>
        <taxon>Endopterygota</taxon>
        <taxon>Diptera</taxon>
        <taxon>Brachycera</taxon>
        <taxon>Muscomorpha</taxon>
        <taxon>Ephydroidea</taxon>
        <taxon>Drosophilidae</taxon>
        <taxon>Drosophila</taxon>
        <taxon>Sophophora</taxon>
    </lineage>
</organism>
<reference key="1">
    <citation type="journal article" date="2002" name="Mol. Genet. Genomics">
        <title>UbcD4, a ubiquitin-conjugating enzyme in Drosophila melanogaster expressed in pole cells.</title>
        <authorList>
            <person name="Canning M."/>
            <person name="Kirby R."/>
            <person name="Finnegan D."/>
        </authorList>
    </citation>
    <scope>NUCLEOTIDE SEQUENCE [MRNA]</scope>
    <scope>FUNCTION</scope>
    <scope>INTERACTION WITH RPN10</scope>
    <scope>TISSUE SPECIFICITY</scope>
    <scope>DEVELOPMENTAL STAGE</scope>
    <source>
        <strain>Canton-S</strain>
        <strain>Oregon-R</strain>
    </source>
</reference>
<reference key="2">
    <citation type="journal article" date="2000" name="Science">
        <title>The genome sequence of Drosophila melanogaster.</title>
        <authorList>
            <person name="Adams M.D."/>
            <person name="Celniker S.E."/>
            <person name="Holt R.A."/>
            <person name="Evans C.A."/>
            <person name="Gocayne J.D."/>
            <person name="Amanatides P.G."/>
            <person name="Scherer S.E."/>
            <person name="Li P.W."/>
            <person name="Hoskins R.A."/>
            <person name="Galle R.F."/>
            <person name="George R.A."/>
            <person name="Lewis S.E."/>
            <person name="Richards S."/>
            <person name="Ashburner M."/>
            <person name="Henderson S.N."/>
            <person name="Sutton G.G."/>
            <person name="Wortman J.R."/>
            <person name="Yandell M.D."/>
            <person name="Zhang Q."/>
            <person name="Chen L.X."/>
            <person name="Brandon R.C."/>
            <person name="Rogers Y.-H.C."/>
            <person name="Blazej R.G."/>
            <person name="Champe M."/>
            <person name="Pfeiffer B.D."/>
            <person name="Wan K.H."/>
            <person name="Doyle C."/>
            <person name="Baxter E.G."/>
            <person name="Helt G."/>
            <person name="Nelson C.R."/>
            <person name="Miklos G.L.G."/>
            <person name="Abril J.F."/>
            <person name="Agbayani A."/>
            <person name="An H.-J."/>
            <person name="Andrews-Pfannkoch C."/>
            <person name="Baldwin D."/>
            <person name="Ballew R.M."/>
            <person name="Basu A."/>
            <person name="Baxendale J."/>
            <person name="Bayraktaroglu L."/>
            <person name="Beasley E.M."/>
            <person name="Beeson K.Y."/>
            <person name="Benos P.V."/>
            <person name="Berman B.P."/>
            <person name="Bhandari D."/>
            <person name="Bolshakov S."/>
            <person name="Borkova D."/>
            <person name="Botchan M.R."/>
            <person name="Bouck J."/>
            <person name="Brokstein P."/>
            <person name="Brottier P."/>
            <person name="Burtis K.C."/>
            <person name="Busam D.A."/>
            <person name="Butler H."/>
            <person name="Cadieu E."/>
            <person name="Center A."/>
            <person name="Chandra I."/>
            <person name="Cherry J.M."/>
            <person name="Cawley S."/>
            <person name="Dahlke C."/>
            <person name="Davenport L.B."/>
            <person name="Davies P."/>
            <person name="de Pablos B."/>
            <person name="Delcher A."/>
            <person name="Deng Z."/>
            <person name="Mays A.D."/>
            <person name="Dew I."/>
            <person name="Dietz S.M."/>
            <person name="Dodson K."/>
            <person name="Doup L.E."/>
            <person name="Downes M."/>
            <person name="Dugan-Rocha S."/>
            <person name="Dunkov B.C."/>
            <person name="Dunn P."/>
            <person name="Durbin K.J."/>
            <person name="Evangelista C.C."/>
            <person name="Ferraz C."/>
            <person name="Ferriera S."/>
            <person name="Fleischmann W."/>
            <person name="Fosler C."/>
            <person name="Gabrielian A.E."/>
            <person name="Garg N.S."/>
            <person name="Gelbart W.M."/>
            <person name="Glasser K."/>
            <person name="Glodek A."/>
            <person name="Gong F."/>
            <person name="Gorrell J.H."/>
            <person name="Gu Z."/>
            <person name="Guan P."/>
            <person name="Harris M."/>
            <person name="Harris N.L."/>
            <person name="Harvey D.A."/>
            <person name="Heiman T.J."/>
            <person name="Hernandez J.R."/>
            <person name="Houck J."/>
            <person name="Hostin D."/>
            <person name="Houston K.A."/>
            <person name="Howland T.J."/>
            <person name="Wei M.-H."/>
            <person name="Ibegwam C."/>
            <person name="Jalali M."/>
            <person name="Kalush F."/>
            <person name="Karpen G.H."/>
            <person name="Ke Z."/>
            <person name="Kennison J.A."/>
            <person name="Ketchum K.A."/>
            <person name="Kimmel B.E."/>
            <person name="Kodira C.D."/>
            <person name="Kraft C.L."/>
            <person name="Kravitz S."/>
            <person name="Kulp D."/>
            <person name="Lai Z."/>
            <person name="Lasko P."/>
            <person name="Lei Y."/>
            <person name="Levitsky A.A."/>
            <person name="Li J.H."/>
            <person name="Li Z."/>
            <person name="Liang Y."/>
            <person name="Lin X."/>
            <person name="Liu X."/>
            <person name="Mattei B."/>
            <person name="McIntosh T.C."/>
            <person name="McLeod M.P."/>
            <person name="McPherson D."/>
            <person name="Merkulov G."/>
            <person name="Milshina N.V."/>
            <person name="Mobarry C."/>
            <person name="Morris J."/>
            <person name="Moshrefi A."/>
            <person name="Mount S.M."/>
            <person name="Moy M."/>
            <person name="Murphy B."/>
            <person name="Murphy L."/>
            <person name="Muzny D.M."/>
            <person name="Nelson D.L."/>
            <person name="Nelson D.R."/>
            <person name="Nelson K.A."/>
            <person name="Nixon K."/>
            <person name="Nusskern D.R."/>
            <person name="Pacleb J.M."/>
            <person name="Palazzolo M."/>
            <person name="Pittman G.S."/>
            <person name="Pan S."/>
            <person name="Pollard J."/>
            <person name="Puri V."/>
            <person name="Reese M.G."/>
            <person name="Reinert K."/>
            <person name="Remington K."/>
            <person name="Saunders R.D.C."/>
            <person name="Scheeler F."/>
            <person name="Shen H."/>
            <person name="Shue B.C."/>
            <person name="Siden-Kiamos I."/>
            <person name="Simpson M."/>
            <person name="Skupski M.P."/>
            <person name="Smith T.J."/>
            <person name="Spier E."/>
            <person name="Spradling A.C."/>
            <person name="Stapleton M."/>
            <person name="Strong R."/>
            <person name="Sun E."/>
            <person name="Svirskas R."/>
            <person name="Tector C."/>
            <person name="Turner R."/>
            <person name="Venter E."/>
            <person name="Wang A.H."/>
            <person name="Wang X."/>
            <person name="Wang Z.-Y."/>
            <person name="Wassarman D.A."/>
            <person name="Weinstock G.M."/>
            <person name="Weissenbach J."/>
            <person name="Williams S.M."/>
            <person name="Woodage T."/>
            <person name="Worley K.C."/>
            <person name="Wu D."/>
            <person name="Yang S."/>
            <person name="Yao Q.A."/>
            <person name="Ye J."/>
            <person name="Yeh R.-F."/>
            <person name="Zaveri J.S."/>
            <person name="Zhan M."/>
            <person name="Zhang G."/>
            <person name="Zhao Q."/>
            <person name="Zheng L."/>
            <person name="Zheng X.H."/>
            <person name="Zhong F.N."/>
            <person name="Zhong W."/>
            <person name="Zhou X."/>
            <person name="Zhu S.C."/>
            <person name="Zhu X."/>
            <person name="Smith H.O."/>
            <person name="Gibbs R.A."/>
            <person name="Myers E.W."/>
            <person name="Rubin G.M."/>
            <person name="Venter J.C."/>
        </authorList>
    </citation>
    <scope>NUCLEOTIDE SEQUENCE [LARGE SCALE GENOMIC DNA]</scope>
    <source>
        <strain>Berkeley</strain>
    </source>
</reference>
<reference key="3">
    <citation type="journal article" date="2002" name="Genome Biol.">
        <title>Annotation of the Drosophila melanogaster euchromatic genome: a systematic review.</title>
        <authorList>
            <person name="Misra S."/>
            <person name="Crosby M.A."/>
            <person name="Mungall C.J."/>
            <person name="Matthews B.B."/>
            <person name="Campbell K.S."/>
            <person name="Hradecky P."/>
            <person name="Huang Y."/>
            <person name="Kaminker J.S."/>
            <person name="Millburn G.H."/>
            <person name="Prochnik S.E."/>
            <person name="Smith C.D."/>
            <person name="Tupy J.L."/>
            <person name="Whitfield E.J."/>
            <person name="Bayraktaroglu L."/>
            <person name="Berman B.P."/>
            <person name="Bettencourt B.R."/>
            <person name="Celniker S.E."/>
            <person name="de Grey A.D.N.J."/>
            <person name="Drysdale R.A."/>
            <person name="Harris N.L."/>
            <person name="Richter J."/>
            <person name="Russo S."/>
            <person name="Schroeder A.J."/>
            <person name="Shu S.Q."/>
            <person name="Stapleton M."/>
            <person name="Yamada C."/>
            <person name="Ashburner M."/>
            <person name="Gelbart W.M."/>
            <person name="Rubin G.M."/>
            <person name="Lewis S.E."/>
        </authorList>
    </citation>
    <scope>GENOME REANNOTATION</scope>
    <source>
        <strain>Berkeley</strain>
    </source>
</reference>
<reference key="4">
    <citation type="journal article" date="2002" name="Genome Biol.">
        <title>A Drosophila full-length cDNA resource.</title>
        <authorList>
            <person name="Stapleton M."/>
            <person name="Carlson J.W."/>
            <person name="Brokstein P."/>
            <person name="Yu C."/>
            <person name="Champe M."/>
            <person name="George R.A."/>
            <person name="Guarin H."/>
            <person name="Kronmiller B."/>
            <person name="Pacleb J.M."/>
            <person name="Park S."/>
            <person name="Wan K.H."/>
            <person name="Rubin G.M."/>
            <person name="Celniker S.E."/>
        </authorList>
    </citation>
    <scope>NUCLEOTIDE SEQUENCE [LARGE SCALE MRNA]</scope>
    <source>
        <strain>Berkeley</strain>
        <tissue>Embryo</tissue>
    </source>
</reference>
<dbReference type="EC" id="2.3.2.23"/>
<dbReference type="EMBL" id="X92838">
    <property type="protein sequence ID" value="CAA63424.1"/>
    <property type="molecule type" value="mRNA"/>
</dbReference>
<dbReference type="EMBL" id="Y11349">
    <property type="protein sequence ID" value="CAA72184.1"/>
    <property type="molecule type" value="Genomic_DNA"/>
</dbReference>
<dbReference type="EMBL" id="AE014296">
    <property type="protein sequence ID" value="AAF50222.1"/>
    <property type="molecule type" value="Genomic_DNA"/>
</dbReference>
<dbReference type="EMBL" id="AY060381">
    <property type="protein sequence ID" value="AAL25420.1"/>
    <property type="molecule type" value="mRNA"/>
</dbReference>
<dbReference type="PIR" id="T08465">
    <property type="entry name" value="T08465"/>
</dbReference>
<dbReference type="RefSeq" id="NP_001287013.1">
    <property type="nucleotide sequence ID" value="NM_001300084.1"/>
</dbReference>
<dbReference type="RefSeq" id="NP_001287014.1">
    <property type="nucleotide sequence ID" value="NM_001300085.1"/>
</dbReference>
<dbReference type="RefSeq" id="NP_524010.2">
    <property type="nucleotide sequence ID" value="NM_079286.3"/>
</dbReference>
<dbReference type="SMR" id="P52486"/>
<dbReference type="BioGRID" id="64522">
    <property type="interactions" value="18"/>
</dbReference>
<dbReference type="DIP" id="DIP-20847N"/>
<dbReference type="FunCoup" id="P52486">
    <property type="interactions" value="3330"/>
</dbReference>
<dbReference type="IntAct" id="P52486">
    <property type="interactions" value="12"/>
</dbReference>
<dbReference type="STRING" id="7227.FBpp0311673"/>
<dbReference type="PaxDb" id="7227-FBpp0076124"/>
<dbReference type="DNASU" id="39133"/>
<dbReference type="EnsemblMetazoa" id="FBtr0076395">
    <property type="protein sequence ID" value="FBpp0076124"/>
    <property type="gene ID" value="FBgn0015321"/>
</dbReference>
<dbReference type="EnsemblMetazoa" id="FBtr0345603">
    <property type="protein sequence ID" value="FBpp0311672"/>
    <property type="gene ID" value="FBgn0015321"/>
</dbReference>
<dbReference type="EnsemblMetazoa" id="FBtr0345604">
    <property type="protein sequence ID" value="FBpp0311673"/>
    <property type="gene ID" value="FBgn0015321"/>
</dbReference>
<dbReference type="GeneID" id="39133"/>
<dbReference type="KEGG" id="dme:Dmel_CG8284"/>
<dbReference type="AGR" id="FB:FBgn0015321"/>
<dbReference type="CTD" id="39133"/>
<dbReference type="FlyBase" id="FBgn0015321">
    <property type="gene designation" value="Ubc4"/>
</dbReference>
<dbReference type="VEuPathDB" id="VectorBase:FBgn0015321"/>
<dbReference type="eggNOG" id="KOG0418">
    <property type="taxonomic scope" value="Eukaryota"/>
</dbReference>
<dbReference type="HOGENOM" id="CLU_030988_13_1_1"/>
<dbReference type="InParanoid" id="P52486"/>
<dbReference type="OMA" id="HWTFVYA"/>
<dbReference type="OrthoDB" id="9993688at2759"/>
<dbReference type="PhylomeDB" id="P52486"/>
<dbReference type="Reactome" id="R-DME-8866652">
    <property type="pathway name" value="Synthesis of active ubiquitin: roles of E1 and E2 enzymes"/>
</dbReference>
<dbReference type="Reactome" id="R-DME-983168">
    <property type="pathway name" value="Antigen processing: Ubiquitination &amp; Proteasome degradation"/>
</dbReference>
<dbReference type="UniPathway" id="UPA00143"/>
<dbReference type="BioGRID-ORCS" id="39133">
    <property type="hits" value="0 hits in 1 CRISPR screen"/>
</dbReference>
<dbReference type="ChiTaRS" id="eff">
    <property type="organism name" value="fly"/>
</dbReference>
<dbReference type="GenomeRNAi" id="39133"/>
<dbReference type="PRO" id="PR:P52486"/>
<dbReference type="Proteomes" id="UP000000803">
    <property type="component" value="Chromosome 3L"/>
</dbReference>
<dbReference type="Bgee" id="FBgn0015321">
    <property type="expression patterns" value="Expressed in spermatocyte cyst cell (Drosophila) in testis and 197 other cell types or tissues"/>
</dbReference>
<dbReference type="ExpressionAtlas" id="P52486">
    <property type="expression patterns" value="baseline and differential"/>
</dbReference>
<dbReference type="GO" id="GO:0005634">
    <property type="term" value="C:nucleus"/>
    <property type="evidence" value="ECO:0000318"/>
    <property type="project" value="GO_Central"/>
</dbReference>
<dbReference type="GO" id="GO:0005524">
    <property type="term" value="F:ATP binding"/>
    <property type="evidence" value="ECO:0007669"/>
    <property type="project" value="UniProtKB-KW"/>
</dbReference>
<dbReference type="GO" id="GO:0070628">
    <property type="term" value="F:proteasome binding"/>
    <property type="evidence" value="ECO:0000353"/>
    <property type="project" value="FlyBase"/>
</dbReference>
<dbReference type="GO" id="GO:0061631">
    <property type="term" value="F:ubiquitin conjugating enzyme activity"/>
    <property type="evidence" value="ECO:0000318"/>
    <property type="project" value="GO_Central"/>
</dbReference>
<dbReference type="GO" id="GO:0031625">
    <property type="term" value="F:ubiquitin protein ligase binding"/>
    <property type="evidence" value="ECO:0000353"/>
    <property type="project" value="FlyBase"/>
</dbReference>
<dbReference type="GO" id="GO:0004842">
    <property type="term" value="F:ubiquitin-protein transferase activity"/>
    <property type="evidence" value="ECO:0000250"/>
    <property type="project" value="FlyBase"/>
</dbReference>
<dbReference type="GO" id="GO:0061059">
    <property type="term" value="P:positive regulation of peptidoglycan recognition protein signaling pathway"/>
    <property type="evidence" value="ECO:0000315"/>
    <property type="project" value="FlyBase"/>
</dbReference>
<dbReference type="GO" id="GO:0000209">
    <property type="term" value="P:protein polyubiquitination"/>
    <property type="evidence" value="ECO:0000250"/>
    <property type="project" value="FlyBase"/>
</dbReference>
<dbReference type="CDD" id="cd14391">
    <property type="entry name" value="UBA_II_E2_UBCD4"/>
    <property type="match status" value="1"/>
</dbReference>
<dbReference type="CDD" id="cd23800">
    <property type="entry name" value="UBCc_UBE2K"/>
    <property type="match status" value="1"/>
</dbReference>
<dbReference type="FunFam" id="1.10.8.10:FF:000010">
    <property type="entry name" value="Putative ubiquitin-conjugating enzyme e2 k"/>
    <property type="match status" value="1"/>
</dbReference>
<dbReference type="FunFam" id="3.10.110.10:FF:000021">
    <property type="entry name" value="Putative ubiquitin-conjugating enzyme e2 k"/>
    <property type="match status" value="1"/>
</dbReference>
<dbReference type="Gene3D" id="1.10.8.10">
    <property type="entry name" value="DNA helicase RuvA subunit, C-terminal domain"/>
    <property type="match status" value="1"/>
</dbReference>
<dbReference type="Gene3D" id="3.10.110.10">
    <property type="entry name" value="Ubiquitin Conjugating Enzyme"/>
    <property type="match status" value="1"/>
</dbReference>
<dbReference type="InterPro" id="IPR015940">
    <property type="entry name" value="UBA"/>
</dbReference>
<dbReference type="InterPro" id="IPR009060">
    <property type="entry name" value="UBA-like_sf"/>
</dbReference>
<dbReference type="InterPro" id="IPR042614">
    <property type="entry name" value="UBCD4_UBA"/>
</dbReference>
<dbReference type="InterPro" id="IPR000608">
    <property type="entry name" value="UBQ-conjugat_E2_core"/>
</dbReference>
<dbReference type="InterPro" id="IPR023313">
    <property type="entry name" value="UBQ-conjugating_AS"/>
</dbReference>
<dbReference type="InterPro" id="IPR016135">
    <property type="entry name" value="UBQ-conjugating_enzyme/RWD"/>
</dbReference>
<dbReference type="PANTHER" id="PTHR24068">
    <property type="entry name" value="UBIQUITIN-CONJUGATING ENZYME E2"/>
    <property type="match status" value="1"/>
</dbReference>
<dbReference type="Pfam" id="PF00179">
    <property type="entry name" value="UQ_con"/>
    <property type="match status" value="1"/>
</dbReference>
<dbReference type="SMART" id="SM00165">
    <property type="entry name" value="UBA"/>
    <property type="match status" value="1"/>
</dbReference>
<dbReference type="SMART" id="SM00212">
    <property type="entry name" value="UBCc"/>
    <property type="match status" value="1"/>
</dbReference>
<dbReference type="SUPFAM" id="SSF46934">
    <property type="entry name" value="UBA-like"/>
    <property type="match status" value="1"/>
</dbReference>
<dbReference type="SUPFAM" id="SSF54495">
    <property type="entry name" value="UBC-like"/>
    <property type="match status" value="1"/>
</dbReference>
<dbReference type="PROSITE" id="PS50030">
    <property type="entry name" value="UBA"/>
    <property type="match status" value="1"/>
</dbReference>
<dbReference type="PROSITE" id="PS00183">
    <property type="entry name" value="UBC_1"/>
    <property type="match status" value="1"/>
</dbReference>
<dbReference type="PROSITE" id="PS50127">
    <property type="entry name" value="UBC_2"/>
    <property type="match status" value="1"/>
</dbReference>
<name>UBCD4_DROME</name>
<comment type="function">
    <text evidence="2 4">Catalyzes the covalent attachment of ubiquitin to other proteins.</text>
</comment>
<comment type="catalytic activity">
    <reaction evidence="2 3">
        <text>S-ubiquitinyl-[E1 ubiquitin-activating enzyme]-L-cysteine + [E2 ubiquitin-conjugating enzyme]-L-cysteine = [E1 ubiquitin-activating enzyme]-L-cysteine + S-ubiquitinyl-[E2 ubiquitin-conjugating enzyme]-L-cysteine.</text>
        <dbReference type="EC" id="2.3.2.23"/>
    </reaction>
</comment>
<comment type="pathway">
    <text evidence="2">Protein modification; protein ubiquitination.</text>
</comment>
<comment type="subunit">
    <text evidence="4">Interacts with Rpn10.</text>
</comment>
<comment type="interaction">
    <interactant intactId="EBI-224571">
        <id>P52486</id>
    </interactant>
    <interactant intactId="EBI-498985">
        <id>Q9VZV5</id>
        <label>CG32486</label>
    </interactant>
    <organismsDiffer>false</organismsDiffer>
    <experiments>3</experiments>
</comment>
<comment type="interaction">
    <interactant intactId="EBI-224571">
        <id>P52486</id>
    </interactant>
    <interactant intactId="EBI-146479">
        <id>P55035</id>
        <label>Rpn10</label>
    </interactant>
    <organismsDiffer>false</organismsDiffer>
    <experiments>2</experiments>
</comment>
<comment type="interaction">
    <interactant intactId="EBI-224571">
        <id>P52486</id>
    </interactant>
    <interactant intactId="EBI-185616">
        <id>Q9VMY2</id>
        <label>synr</label>
    </interactant>
    <organismsDiffer>false</organismsDiffer>
    <experiments>4</experiments>
</comment>
<comment type="tissue specificity">
    <text evidence="4">During gastrulation, expression is highest in the invaginating posterior midgut primordium (PMG), high expression is also observed in the cephalic furrow and ventral ectodermal neurogenic region. In stage 10-11 embryos, expression is high in the pole cells present in the pocket formed by the PMG. During germ band retraction, expression appears to reinitiate in many tissues, especially the gut and nervous system. After dorsal closure, expression is detectable at low levels throughout the embryo.</text>
</comment>
<comment type="developmental stage">
    <text evidence="4">Expressed both maternally and zygotically. Embryonic expression is highest at 0-8 hours.</text>
</comment>
<comment type="similarity">
    <text evidence="2">Belongs to the ubiquitin-conjugating enzyme family.</text>
</comment>
<accession>P52486</accession>
<accession>P91633</accession>
<evidence type="ECO:0000255" key="1">
    <source>
        <dbReference type="PROSITE-ProRule" id="PRU00212"/>
    </source>
</evidence>
<evidence type="ECO:0000255" key="2">
    <source>
        <dbReference type="PROSITE-ProRule" id="PRU00388"/>
    </source>
</evidence>
<evidence type="ECO:0000255" key="3">
    <source>
        <dbReference type="PROSITE-ProRule" id="PRU10133"/>
    </source>
</evidence>
<evidence type="ECO:0000269" key="4">
    <source>
    </source>
</evidence>
<evidence type="ECO:0000305" key="5"/>
<evidence type="ECO:0000312" key="6">
    <source>
        <dbReference type="FlyBase" id="FBgn0015321"/>
    </source>
</evidence>
<sequence length="199" mass="22510">MANMAVSRIKREFKEVMRSEEIVQCSIKIELVNDSWTELRGEIAGPPDTPYEGGKFVLEIKVPETYPFNPPKVRFITRIWHPNISSVTGAICLDILKDNWAAAMTLRTVLLSLQALLAAAEPDDPQDAVVAYQFKDKYDLFLLTAKHWTNAYAGGPHTFPDCDSKIQRLRDMGIDEHEARAVLSKENWNLEKATEGLFS</sequence>
<proteinExistence type="evidence at protein level"/>
<feature type="chain" id="PRO_0000082522" description="Ubiquitin-conjugating enzyme E2-22 kDa">
    <location>
        <begin position="1"/>
        <end position="199"/>
    </location>
</feature>
<feature type="domain" description="UBC core" evidence="2">
    <location>
        <begin position="4"/>
        <end position="154"/>
    </location>
</feature>
<feature type="domain" description="UBA" evidence="1">
    <location>
        <begin position="161"/>
        <end position="199"/>
    </location>
</feature>
<feature type="active site" description="Glycyl thioester intermediate" evidence="2 3">
    <location>
        <position position="92"/>
    </location>
</feature>
<feature type="sequence conflict" description="In Ref. 1; CAA63424." evidence="5" ref="1">
    <original>DSW</original>
    <variation>GQL</variation>
    <location>
        <begin position="34"/>
        <end position="36"/>
    </location>
</feature>
<feature type="sequence conflict" description="In Ref. 1; CAA63424." evidence="5" ref="1">
    <original>V</original>
    <variation>A</variation>
    <location>
        <position position="73"/>
    </location>
</feature>
<protein>
    <recommendedName>
        <fullName>Ubiquitin-conjugating enzyme E2-22 kDa</fullName>
        <ecNumber>2.3.2.23</ecNumber>
    </recommendedName>
    <alternativeName>
        <fullName>E2 ubiquitin-conjugating enzyme 4</fullName>
    </alternativeName>
    <alternativeName>
        <fullName>Ubiquitin carrier protein</fullName>
    </alternativeName>
    <alternativeName>
        <fullName>Ubiquitin-protein ligase</fullName>
    </alternativeName>
</protein>
<gene>
    <name evidence="6" type="primary">Ubc4</name>
    <name type="synonym">UbcD4</name>
    <name evidence="6" type="ORF">CG8284</name>
</gene>
<keyword id="KW-0067">ATP-binding</keyword>
<keyword id="KW-0547">Nucleotide-binding</keyword>
<keyword id="KW-1185">Reference proteome</keyword>
<keyword id="KW-0808">Transferase</keyword>
<keyword id="KW-0833">Ubl conjugation pathway</keyword>